<comment type="function">
    <molecule>Gag polyprotein</molecule>
    <text evidence="1">The matrix domain targets Gag, Gag-Pro and Gag-Pro-Pol polyproteins to the plasma membrane via a multipartite membrane binding signal, that includes its myristoylated N-terminus.</text>
</comment>
<comment type="function">
    <molecule>Matrix protein p19</molecule>
    <text evidence="1">Matrix protein.</text>
</comment>
<comment type="function">
    <molecule>Capsid protein p24</molecule>
    <text evidence="1">Forms the spherical core of the virus that encapsulates the genomic RNA-nucleocapsid complex.</text>
</comment>
<comment type="function">
    <molecule>Nucleocapsid protein p15-gag</molecule>
    <text evidence="1">Binds strongly to viral nucleic acids and promote their aggregation. Also destabilizes the nucleic acids duplexes via highly structured zinc-binding motifs.</text>
</comment>
<comment type="subunit">
    <molecule>Gag polyprotein</molecule>
    <text evidence="1">Homodimer; the homodimers are part of the immature particles. Interacts with human TSG101 and NEDD4; these interactions are essential for budding and release of viral particles.</text>
</comment>
<comment type="subunit">
    <molecule>Matrix protein p19</molecule>
    <text evidence="1">Homodimer; further assembles as homohexamers.</text>
</comment>
<comment type="subcellular location">
    <molecule>Matrix protein p19</molecule>
    <subcellularLocation>
        <location evidence="1">Virion</location>
    </subcellularLocation>
</comment>
<comment type="subcellular location">
    <molecule>Capsid protein p24</molecule>
    <subcellularLocation>
        <location evidence="1">Virion</location>
    </subcellularLocation>
</comment>
<comment type="subcellular location">
    <molecule>Nucleocapsid protein p15-gag</molecule>
    <subcellularLocation>
        <location evidence="1">Virion</location>
    </subcellularLocation>
</comment>
<comment type="alternative products">
    <event type="ribosomal frameshifting"/>
    <isoform>
        <id>P14076-1</id>
        <name>Gag polyprotein</name>
        <sequence type="displayed"/>
    </isoform>
    <isoform>
        <id>P14074-1</id>
        <name>Gag-Pro polyprotein</name>
        <sequence type="external"/>
    </isoform>
    <isoform>
        <id>P14078-1</id>
        <name>Gag-Pol polyprotein</name>
        <sequence type="external"/>
    </isoform>
    <text evidence="5">This strategy of translation probably allows the virus to modulate the quantity of each viral protein.</text>
</comment>
<comment type="domain">
    <molecule>Gag polyprotein</molecule>
    <text evidence="1">Late-budding domains (L domains) are short sequence motifs essential for viral particle release. They can occur individually or in close proximity within structural proteins. They interacts with sorting cellular proteins of the multivesicular body (MVB) pathway. Most of these proteins are class E vacuolar protein sorting factors belonging to ESCRT-I, ESCRT-II or ESCRT-III complexes. Matrix protein p19 contains two L domains: a PTAP/PSAP motif which interacts with the UEV domain of TSG101, and a PPXY motif which binds to the WW domains of the ubiquitin ligase NEDD4.</text>
</comment>
<comment type="domain">
    <molecule>Capsid protein p24</molecule>
    <text evidence="1">The capsid protein N-terminus seems to be involved in Gag-Gag interactions.</text>
</comment>
<comment type="domain">
    <molecule>Nucleocapsid protein p15-gag</molecule>
    <text evidence="1">The C-terminus is acidic.</text>
</comment>
<comment type="PTM">
    <molecule>Gag polyprotein</molecule>
    <text evidence="1">Specific enzymatic cleavages by the viral protease yield mature proteins. The polyprotein is cleaved during and after budding, this process is termed maturation.</text>
</comment>
<comment type="PTM">
    <molecule>Matrix protein p19</molecule>
    <text evidence="1">Phosphorylation of the matrix protein p19 by MAPK1 seems to play a role in budding.</text>
</comment>
<comment type="PTM">
    <molecule>Gag polyprotein</molecule>
    <text evidence="1">Ubiquitinated by host NEDD4.</text>
</comment>
<comment type="PTM">
    <molecule>Gag polyprotein</molecule>
    <text evidence="1">Myristoylated. Myristoylation of the matrix (MA) domain mediates the transport and binding of Gag polyproteins to the host plasma membrane and is required for the assembly of viral particles.</text>
</comment>
<comment type="miscellaneous">
    <text evidence="5">HTLV-1 lineages are divided in four clades, A (Cosmopolitan), B (Central African group), C (Melanesian group) and D (New Central African group).</text>
</comment>
<comment type="miscellaneous">
    <molecule>Isoform Gag polyprotein</molecule>
    <text evidence="1">Produced by conventional translation.</text>
</comment>
<proteinExistence type="inferred from homology"/>
<sequence length="429" mass="47514">MGQIFSRSASPIPRPPRGLAAHHWLNFLQAAYRLEPGPSSYDFHQLKKFLKIALETPVWICPINYSLLASLLPKGYPGRVNEILHILIQTQAQIPSRPAPPPPSSSTHDPPDSDPQIPPPYVEPTAPQVLPVMHPHGAPPNHRPWQMKDLQAIKQEVSQAAPGSPQFMQTIRLAVQQFDPTAKDLQDLLQYLCSSLVASLHHQQLDSLISEAETRGITGYNPLAGPLRVQANNPQQQGLRREYQQLWLAAFAALPGSAKDPSWASILQGLEEPYHAFVERLNIALDNGLPEGTPKDPILRSLAYSNANKECQKLLQARGHTNSPLGDMLRACQAWTPKDKTKVLVVQPKKPPPNQPCFRCGKAGHWSRDCTQPRPPPGPCPLCQDPTHWKRDCPRLKPTIPEPEPEEDALLLDLPADIPHPKNSIGGEV</sequence>
<name>GAG_HTL1C</name>
<organism>
    <name type="scientific">Human T-cell leukemia virus 1 (isolate Caribbea HS-35 subtype A)</name>
    <name type="common">HTLV-1</name>
    <dbReference type="NCBI Taxonomy" id="11927"/>
    <lineage>
        <taxon>Viruses</taxon>
        <taxon>Riboviria</taxon>
        <taxon>Pararnavirae</taxon>
        <taxon>Artverviricota</taxon>
        <taxon>Revtraviricetes</taxon>
        <taxon>Ortervirales</taxon>
        <taxon>Retroviridae</taxon>
        <taxon>Orthoretrovirinae</taxon>
        <taxon>Deltaretrovirus</taxon>
        <taxon>Primate T-lymphotropic virus 1</taxon>
    </lineage>
</organism>
<organismHost>
    <name type="scientific">Homo sapiens</name>
    <name type="common">Human</name>
    <dbReference type="NCBI Taxonomy" id="9606"/>
</organismHost>
<gene>
    <name type="primary">gag</name>
</gene>
<accession>P14076</accession>
<accession>O56229</accession>
<protein>
    <recommendedName>
        <fullName>Gag polyprotein</fullName>
    </recommendedName>
    <alternativeName>
        <fullName>Pr53Gag</fullName>
    </alternativeName>
    <component>
        <recommendedName>
            <fullName>Matrix protein p19</fullName>
            <shortName>MA</shortName>
        </recommendedName>
    </component>
    <component>
        <recommendedName>
            <fullName>Capsid protein p24</fullName>
            <shortName>CA</shortName>
        </recommendedName>
    </component>
    <component>
        <recommendedName>
            <fullName>Nucleocapsid protein p15-gag</fullName>
            <shortName>NC-gag</shortName>
        </recommendedName>
    </component>
</protein>
<dbReference type="EMBL" id="D13784">
    <property type="protein sequence ID" value="BAA02929.1"/>
    <property type="molecule type" value="Genomic_DNA"/>
</dbReference>
<dbReference type="EMBL" id="AF033817">
    <property type="protein sequence ID" value="AAC82579.1"/>
    <property type="molecule type" value="Genomic_DNA"/>
</dbReference>
<dbReference type="PIR" id="A28136">
    <property type="entry name" value="FOLJCN"/>
</dbReference>
<dbReference type="RefSeq" id="NP_057862.1">
    <property type="nucleotide sequence ID" value="NC_001436.1"/>
</dbReference>
<dbReference type="BMRB" id="P14076"/>
<dbReference type="SMR" id="P14076"/>
<dbReference type="GeneID" id="1491934"/>
<dbReference type="KEGG" id="vg:1491934"/>
<dbReference type="Proteomes" id="UP000001061">
    <property type="component" value="Segment"/>
</dbReference>
<dbReference type="Proteomes" id="UP000110593">
    <property type="component" value="Genome"/>
</dbReference>
<dbReference type="GO" id="GO:0019013">
    <property type="term" value="C:viral nucleocapsid"/>
    <property type="evidence" value="ECO:0007669"/>
    <property type="project" value="UniProtKB-KW"/>
</dbReference>
<dbReference type="GO" id="GO:0003676">
    <property type="term" value="F:nucleic acid binding"/>
    <property type="evidence" value="ECO:0007669"/>
    <property type="project" value="InterPro"/>
</dbReference>
<dbReference type="GO" id="GO:0005198">
    <property type="term" value="F:structural molecule activity"/>
    <property type="evidence" value="ECO:0007669"/>
    <property type="project" value="InterPro"/>
</dbReference>
<dbReference type="GO" id="GO:0008270">
    <property type="term" value="F:zinc ion binding"/>
    <property type="evidence" value="ECO:0007669"/>
    <property type="project" value="UniProtKB-KW"/>
</dbReference>
<dbReference type="GO" id="GO:0075523">
    <property type="term" value="P:viral translational frameshifting"/>
    <property type="evidence" value="ECO:0007669"/>
    <property type="project" value="UniProtKB-KW"/>
</dbReference>
<dbReference type="FunFam" id="1.10.185.10:FF:000001">
    <property type="entry name" value="Gag polyprotein"/>
    <property type="match status" value="1"/>
</dbReference>
<dbReference type="Gene3D" id="1.10.1200.30">
    <property type="match status" value="1"/>
</dbReference>
<dbReference type="Gene3D" id="1.10.185.10">
    <property type="entry name" value="Delta-retroviral matrix"/>
    <property type="match status" value="1"/>
</dbReference>
<dbReference type="Gene3D" id="1.10.375.10">
    <property type="entry name" value="Human Immunodeficiency Virus Type 1 Capsid Protein"/>
    <property type="match status" value="1"/>
</dbReference>
<dbReference type="Gene3D" id="4.10.60.10">
    <property type="entry name" value="Zinc finger, CCHC-type"/>
    <property type="match status" value="1"/>
</dbReference>
<dbReference type="InterPro" id="IPR003139">
    <property type="entry name" value="D_retro_matrix"/>
</dbReference>
<dbReference type="InterPro" id="IPR045345">
    <property type="entry name" value="Gag_p24_C"/>
</dbReference>
<dbReference type="InterPro" id="IPR050195">
    <property type="entry name" value="Primate_lentivir_Gag_pol-like"/>
</dbReference>
<dbReference type="InterPro" id="IPR008916">
    <property type="entry name" value="Retrov_capsid_C"/>
</dbReference>
<dbReference type="InterPro" id="IPR008919">
    <property type="entry name" value="Retrov_capsid_N"/>
</dbReference>
<dbReference type="InterPro" id="IPR010999">
    <property type="entry name" value="Retrovr_matrix"/>
</dbReference>
<dbReference type="InterPro" id="IPR001878">
    <property type="entry name" value="Znf_CCHC"/>
</dbReference>
<dbReference type="InterPro" id="IPR036875">
    <property type="entry name" value="Znf_CCHC_sf"/>
</dbReference>
<dbReference type="PANTHER" id="PTHR40389">
    <property type="entry name" value="ENDOGENOUS RETROVIRUS GROUP K MEMBER 24 GAG POLYPROTEIN-RELATED"/>
    <property type="match status" value="1"/>
</dbReference>
<dbReference type="PANTHER" id="PTHR40389:SF3">
    <property type="entry name" value="IGE-BINDING PROTEIN"/>
    <property type="match status" value="1"/>
</dbReference>
<dbReference type="Pfam" id="PF02228">
    <property type="entry name" value="Gag_p19"/>
    <property type="match status" value="1"/>
</dbReference>
<dbReference type="Pfam" id="PF00607">
    <property type="entry name" value="Gag_p24"/>
    <property type="match status" value="1"/>
</dbReference>
<dbReference type="Pfam" id="PF19317">
    <property type="entry name" value="Gag_p24_C"/>
    <property type="match status" value="1"/>
</dbReference>
<dbReference type="Pfam" id="PF00098">
    <property type="entry name" value="zf-CCHC"/>
    <property type="match status" value="1"/>
</dbReference>
<dbReference type="SMART" id="SM00343">
    <property type="entry name" value="ZnF_C2HC"/>
    <property type="match status" value="2"/>
</dbReference>
<dbReference type="SUPFAM" id="SSF47836">
    <property type="entry name" value="Retroviral matrix proteins"/>
    <property type="match status" value="1"/>
</dbReference>
<dbReference type="SUPFAM" id="SSF47353">
    <property type="entry name" value="Retrovirus capsid dimerization domain-like"/>
    <property type="match status" value="1"/>
</dbReference>
<dbReference type="SUPFAM" id="SSF47943">
    <property type="entry name" value="Retrovirus capsid protein, N-terminal core domain"/>
    <property type="match status" value="1"/>
</dbReference>
<dbReference type="SUPFAM" id="SSF57756">
    <property type="entry name" value="Retrovirus zinc finger-like domains"/>
    <property type="match status" value="1"/>
</dbReference>
<dbReference type="PROSITE" id="PS50158">
    <property type="entry name" value="ZF_CCHC"/>
    <property type="match status" value="1"/>
</dbReference>
<evidence type="ECO:0000250" key="1">
    <source>
        <dbReference type="UniProtKB" id="P03345"/>
    </source>
</evidence>
<evidence type="ECO:0000255" key="2"/>
<evidence type="ECO:0000255" key="3">
    <source>
        <dbReference type="PROSITE-ProRule" id="PRU00047"/>
    </source>
</evidence>
<evidence type="ECO:0000256" key="4">
    <source>
        <dbReference type="SAM" id="MobiDB-lite"/>
    </source>
</evidence>
<evidence type="ECO:0000305" key="5"/>
<reference key="1">
    <citation type="journal article" date="1988" name="J. Gen. Virol.">
        <title>Molecular cloning and complete nucleotide sequence of an adult T cell leukaemia virus/human T cell leukaemia virus type I (ATLV/HTLV-I) isolate of Caribbean origin: relationship to other members of the ATLV/HTLV-I subgroup.</title>
        <authorList>
            <person name="Malik K.T.A."/>
            <person name="Even J."/>
            <person name="Karpas A."/>
        </authorList>
    </citation>
    <scope>NUCLEOTIDE SEQUENCE [GENOMIC DNA]</scope>
</reference>
<keyword id="KW-0167">Capsid protein</keyword>
<keyword id="KW-1015">Disulfide bond</keyword>
<keyword id="KW-0945">Host-virus interaction</keyword>
<keyword id="KW-0449">Lipoprotein</keyword>
<keyword id="KW-0479">Metal-binding</keyword>
<keyword id="KW-0519">Myristate</keyword>
<keyword id="KW-0597">Phosphoprotein</keyword>
<keyword id="KW-1185">Reference proteome</keyword>
<keyword id="KW-0677">Repeat</keyword>
<keyword id="KW-0688">Ribosomal frameshifting</keyword>
<keyword id="KW-0832">Ubl conjugation</keyword>
<keyword id="KW-0543">Viral nucleoprotein</keyword>
<keyword id="KW-0946">Virion</keyword>
<keyword id="KW-0862">Zinc</keyword>
<keyword id="KW-0863">Zinc-finger</keyword>
<feature type="initiator methionine" description="Removed; by host" evidence="2">
    <location>
        <position position="1"/>
    </location>
</feature>
<feature type="chain" id="PRO_0000259772" description="Gag polyprotein">
    <location>
        <begin position="2"/>
        <end position="429"/>
    </location>
</feature>
<feature type="chain" id="PRO_0000038814" description="Matrix protein p19">
    <location>
        <begin position="2"/>
        <end position="130"/>
    </location>
</feature>
<feature type="chain" id="PRO_0000038815" description="Capsid protein p24">
    <location>
        <begin position="131"/>
        <end position="344"/>
    </location>
</feature>
<feature type="chain" id="PRO_0000038816" description="Nucleocapsid protein p15-gag">
    <location>
        <begin position="345"/>
        <end position="429"/>
    </location>
</feature>
<feature type="zinc finger region" description="CCHC-type 1" evidence="3">
    <location>
        <begin position="355"/>
        <end position="372"/>
    </location>
</feature>
<feature type="zinc finger region" description="CCHC-type 2" evidence="3">
    <location>
        <begin position="378"/>
        <end position="395"/>
    </location>
</feature>
<feature type="region of interest" description="Disordered" evidence="4">
    <location>
        <begin position="93"/>
        <end position="142"/>
    </location>
</feature>
<feature type="short sequence motif" description="PPXY motif" evidence="1">
    <location>
        <begin position="118"/>
        <end position="121"/>
    </location>
</feature>
<feature type="short sequence motif" description="PTAP/PSAP motif" evidence="1">
    <location>
        <begin position="124"/>
        <end position="127"/>
    </location>
</feature>
<feature type="site" description="Cleavage; by viral protease" evidence="1">
    <location>
        <begin position="130"/>
        <end position="131"/>
    </location>
</feature>
<feature type="site" description="Cleavage; by viral protease" evidence="1">
    <location>
        <begin position="344"/>
        <end position="345"/>
    </location>
</feature>
<feature type="modified residue" description="Phosphoserine; by host MAPK1" evidence="1">
    <location>
        <position position="105"/>
    </location>
</feature>
<feature type="lipid moiety-binding region" description="N-myristoyl glycine; by host" evidence="2">
    <location>
        <position position="2"/>
    </location>
</feature>
<feature type="disulfide bond" description="Interchain" evidence="1">
    <location>
        <position position="61"/>
    </location>
</feature>